<reference key="1">
    <citation type="journal article" date="2008" name="Genomics">
        <title>Evolution in the laboratory: the genome of Halobacterium salinarum strain R1 compared to that of strain NRC-1.</title>
        <authorList>
            <person name="Pfeiffer F."/>
            <person name="Schuster S.C."/>
            <person name="Broicher A."/>
            <person name="Falb M."/>
            <person name="Palm P."/>
            <person name="Rodewald K."/>
            <person name="Ruepp A."/>
            <person name="Soppa J."/>
            <person name="Tittor J."/>
            <person name="Oesterhelt D."/>
        </authorList>
    </citation>
    <scope>NUCLEOTIDE SEQUENCE [LARGE SCALE GENOMIC DNA]</scope>
    <source>
        <strain>ATCC 29341 / DSM 671 / R1</strain>
    </source>
</reference>
<feature type="chain" id="PRO_0000349158" description="IMP cyclohydrolase">
    <location>
        <begin position="1"/>
        <end position="194"/>
    </location>
</feature>
<dbReference type="EC" id="3.5.4.10" evidence="1"/>
<dbReference type="EMBL" id="AM774415">
    <property type="protein sequence ID" value="CAP14773.1"/>
    <property type="molecule type" value="Genomic_DNA"/>
</dbReference>
<dbReference type="RefSeq" id="WP_010903769.1">
    <property type="nucleotide sequence ID" value="NC_010364.1"/>
</dbReference>
<dbReference type="SMR" id="B0R7Q4"/>
<dbReference type="EnsemblBacteria" id="CAP14773">
    <property type="protein sequence ID" value="CAP14773"/>
    <property type="gene ID" value="OE_4329F"/>
</dbReference>
<dbReference type="GeneID" id="89348396"/>
<dbReference type="KEGG" id="hsl:OE_4329F"/>
<dbReference type="HOGENOM" id="CLU_1352116_0_0_2"/>
<dbReference type="PhylomeDB" id="B0R7Q4"/>
<dbReference type="UniPathway" id="UPA00074">
    <property type="reaction ID" value="UER00135"/>
</dbReference>
<dbReference type="Proteomes" id="UP000001321">
    <property type="component" value="Chromosome"/>
</dbReference>
<dbReference type="GO" id="GO:0003937">
    <property type="term" value="F:IMP cyclohydrolase activity"/>
    <property type="evidence" value="ECO:0007669"/>
    <property type="project" value="UniProtKB-UniRule"/>
</dbReference>
<dbReference type="GO" id="GO:0006189">
    <property type="term" value="P:'de novo' IMP biosynthetic process"/>
    <property type="evidence" value="ECO:0007669"/>
    <property type="project" value="UniProtKB-UniRule"/>
</dbReference>
<dbReference type="Gene3D" id="3.60.20.20">
    <property type="entry name" value="Inosine monophosphate cyclohydrolase-like"/>
    <property type="match status" value="1"/>
</dbReference>
<dbReference type="HAMAP" id="MF_00705">
    <property type="entry name" value="IMP_cyclohydrol"/>
    <property type="match status" value="1"/>
</dbReference>
<dbReference type="InterPro" id="IPR010191">
    <property type="entry name" value="IMP_cyclohydrolase"/>
</dbReference>
<dbReference type="InterPro" id="IPR020600">
    <property type="entry name" value="IMP_cyclohydrolase-like"/>
</dbReference>
<dbReference type="InterPro" id="IPR036795">
    <property type="entry name" value="IMP_cyclohydrolase-like_sf"/>
</dbReference>
<dbReference type="NCBIfam" id="NF003167">
    <property type="entry name" value="PRK04151.1"/>
    <property type="match status" value="1"/>
</dbReference>
<dbReference type="NCBIfam" id="TIGR01922">
    <property type="entry name" value="purO_arch"/>
    <property type="match status" value="1"/>
</dbReference>
<dbReference type="Pfam" id="PF07826">
    <property type="entry name" value="IMP_cyclohyd"/>
    <property type="match status" value="1"/>
</dbReference>
<dbReference type="PIRSF" id="PIRSF004866">
    <property type="entry name" value="IMP_cclhdr_arch"/>
    <property type="match status" value="1"/>
</dbReference>
<dbReference type="SUPFAM" id="SSF75569">
    <property type="entry name" value="Archaeal IMP cyclohydrolase PurO"/>
    <property type="match status" value="1"/>
</dbReference>
<organism>
    <name type="scientific">Halobacterium salinarum (strain ATCC 29341 / DSM 671 / R1)</name>
    <dbReference type="NCBI Taxonomy" id="478009"/>
    <lineage>
        <taxon>Archaea</taxon>
        <taxon>Methanobacteriati</taxon>
        <taxon>Methanobacteriota</taxon>
        <taxon>Stenosarchaea group</taxon>
        <taxon>Halobacteria</taxon>
        <taxon>Halobacteriales</taxon>
        <taxon>Halobacteriaceae</taxon>
        <taxon>Halobacterium</taxon>
        <taxon>Halobacterium salinarum NRC-34001</taxon>
    </lineage>
</organism>
<gene>
    <name evidence="1" type="primary">purO</name>
    <name type="ordered locus">OE_4329F</name>
</gene>
<sequence length="194" mass="20480">MYIGRFVVVGPSVAAYRVSSRSFPNRKLIERPAGLTVVPTADAEETTNPYVSYNCVRTAGGHAVVGNGSHVDPITEKVERGYPPRDALTEALLAMDYEKDDYDTPRIAGVLAPDGTAYVGIVRADAVLVRAVEEPTLVATYEKDAPEAIGFDAATAADAAREAYSAAFEHAVCAAGVSRRGVGDGYDTAVVNDP</sequence>
<protein>
    <recommendedName>
        <fullName evidence="1">IMP cyclohydrolase</fullName>
        <ecNumber evidence="1">3.5.4.10</ecNumber>
    </recommendedName>
    <alternativeName>
        <fullName evidence="1">IMP synthase</fullName>
    </alternativeName>
    <alternativeName>
        <fullName evidence="1">Inosinicase</fullName>
    </alternativeName>
</protein>
<comment type="function">
    <text evidence="1">Catalyzes the cyclization of 5-formylamidoimidazole-4-carboxamide ribonucleotide to IMP.</text>
</comment>
<comment type="catalytic activity">
    <reaction evidence="1">
        <text>IMP + H2O = 5-formamido-1-(5-phospho-D-ribosyl)imidazole-4-carboxamide</text>
        <dbReference type="Rhea" id="RHEA:18445"/>
        <dbReference type="ChEBI" id="CHEBI:15377"/>
        <dbReference type="ChEBI" id="CHEBI:58053"/>
        <dbReference type="ChEBI" id="CHEBI:58467"/>
        <dbReference type="EC" id="3.5.4.10"/>
    </reaction>
</comment>
<comment type="pathway">
    <text evidence="1">Purine metabolism; IMP biosynthesis via de novo pathway; IMP from 5-formamido-1-(5-phospho-D-ribosyl)imidazole-4-carboxamide: step 1/1.</text>
</comment>
<comment type="similarity">
    <text evidence="1">Belongs to the archaeal IMP cyclohydrolase family.</text>
</comment>
<name>PURO_HALS3</name>
<evidence type="ECO:0000255" key="1">
    <source>
        <dbReference type="HAMAP-Rule" id="MF_00705"/>
    </source>
</evidence>
<proteinExistence type="inferred from homology"/>
<accession>B0R7Q4</accession>
<keyword id="KW-0378">Hydrolase</keyword>
<keyword id="KW-0658">Purine biosynthesis</keyword>